<proteinExistence type="inferred from homology"/>
<evidence type="ECO:0000255" key="1">
    <source>
        <dbReference type="HAMAP-Rule" id="MF_00127"/>
    </source>
</evidence>
<organism>
    <name type="scientific">Deinococcus radiodurans (strain ATCC 13939 / DSM 20539 / JCM 16871 / CCUG 27074 / LMG 4051 / NBRC 15346 / NCIMB 9279 / VKM B-1422 / R1)</name>
    <dbReference type="NCBI Taxonomy" id="243230"/>
    <lineage>
        <taxon>Bacteria</taxon>
        <taxon>Thermotogati</taxon>
        <taxon>Deinococcota</taxon>
        <taxon>Deinococci</taxon>
        <taxon>Deinococcales</taxon>
        <taxon>Deinococcaceae</taxon>
        <taxon>Deinococcus</taxon>
    </lineage>
</organism>
<keyword id="KW-0030">Aminoacyl-tRNA synthetase</keyword>
<keyword id="KW-0067">ATP-binding</keyword>
<keyword id="KW-0963">Cytoplasm</keyword>
<keyword id="KW-0436">Ligase</keyword>
<keyword id="KW-0547">Nucleotide-binding</keyword>
<keyword id="KW-0648">Protein biosynthesis</keyword>
<keyword id="KW-1185">Reference proteome</keyword>
<dbReference type="EC" id="6.1.1.21" evidence="1"/>
<dbReference type="EMBL" id="AE000513">
    <property type="protein sequence ID" value="AAF10919.1"/>
    <property type="molecule type" value="Genomic_DNA"/>
</dbReference>
<dbReference type="PIR" id="F75406">
    <property type="entry name" value="F75406"/>
</dbReference>
<dbReference type="RefSeq" id="NP_295072.1">
    <property type="nucleotide sequence ID" value="NC_001263.1"/>
</dbReference>
<dbReference type="RefSeq" id="WP_010887990.1">
    <property type="nucleotide sequence ID" value="NC_001263.1"/>
</dbReference>
<dbReference type="SMR" id="Q9RUN5"/>
<dbReference type="FunCoup" id="Q9RUN5">
    <property type="interactions" value="457"/>
</dbReference>
<dbReference type="STRING" id="243230.DR_1349"/>
<dbReference type="PaxDb" id="243230-DR_1349"/>
<dbReference type="EnsemblBacteria" id="AAF10919">
    <property type="protein sequence ID" value="AAF10919"/>
    <property type="gene ID" value="DR_1349"/>
</dbReference>
<dbReference type="GeneID" id="69517594"/>
<dbReference type="KEGG" id="dra:DR_1349"/>
<dbReference type="PATRIC" id="fig|243230.17.peg.1546"/>
<dbReference type="eggNOG" id="COG0124">
    <property type="taxonomic scope" value="Bacteria"/>
</dbReference>
<dbReference type="HOGENOM" id="CLU_025113_1_1_0"/>
<dbReference type="InParanoid" id="Q9RUN5"/>
<dbReference type="OrthoDB" id="9800814at2"/>
<dbReference type="Proteomes" id="UP000002524">
    <property type="component" value="Chromosome 1"/>
</dbReference>
<dbReference type="GO" id="GO:0005737">
    <property type="term" value="C:cytoplasm"/>
    <property type="evidence" value="ECO:0007669"/>
    <property type="project" value="UniProtKB-SubCell"/>
</dbReference>
<dbReference type="GO" id="GO:0005524">
    <property type="term" value="F:ATP binding"/>
    <property type="evidence" value="ECO:0007669"/>
    <property type="project" value="UniProtKB-UniRule"/>
</dbReference>
<dbReference type="GO" id="GO:0004821">
    <property type="term" value="F:histidine-tRNA ligase activity"/>
    <property type="evidence" value="ECO:0000318"/>
    <property type="project" value="GO_Central"/>
</dbReference>
<dbReference type="GO" id="GO:0006427">
    <property type="term" value="P:histidyl-tRNA aminoacylation"/>
    <property type="evidence" value="ECO:0000318"/>
    <property type="project" value="GO_Central"/>
</dbReference>
<dbReference type="CDD" id="cd00773">
    <property type="entry name" value="HisRS-like_core"/>
    <property type="match status" value="1"/>
</dbReference>
<dbReference type="CDD" id="cd00859">
    <property type="entry name" value="HisRS_anticodon"/>
    <property type="match status" value="1"/>
</dbReference>
<dbReference type="FunFam" id="3.30.930.10:FF:000121">
    <property type="entry name" value="Histidine--tRNA ligase"/>
    <property type="match status" value="1"/>
</dbReference>
<dbReference type="Gene3D" id="3.40.50.800">
    <property type="entry name" value="Anticodon-binding domain"/>
    <property type="match status" value="1"/>
</dbReference>
<dbReference type="Gene3D" id="3.30.930.10">
    <property type="entry name" value="Bira Bifunctional Protein, Domain 2"/>
    <property type="match status" value="1"/>
</dbReference>
<dbReference type="HAMAP" id="MF_00127">
    <property type="entry name" value="His_tRNA_synth"/>
    <property type="match status" value="1"/>
</dbReference>
<dbReference type="InterPro" id="IPR006195">
    <property type="entry name" value="aa-tRNA-synth_II"/>
</dbReference>
<dbReference type="InterPro" id="IPR045864">
    <property type="entry name" value="aa-tRNA-synth_II/BPL/LPL"/>
</dbReference>
<dbReference type="InterPro" id="IPR004154">
    <property type="entry name" value="Anticodon-bd"/>
</dbReference>
<dbReference type="InterPro" id="IPR036621">
    <property type="entry name" value="Anticodon-bd_dom_sf"/>
</dbReference>
<dbReference type="InterPro" id="IPR015807">
    <property type="entry name" value="His-tRNA-ligase"/>
</dbReference>
<dbReference type="InterPro" id="IPR041715">
    <property type="entry name" value="HisRS-like_core"/>
</dbReference>
<dbReference type="InterPro" id="IPR004516">
    <property type="entry name" value="HisRS/HisZ"/>
</dbReference>
<dbReference type="InterPro" id="IPR033656">
    <property type="entry name" value="HisRS_anticodon"/>
</dbReference>
<dbReference type="NCBIfam" id="TIGR00442">
    <property type="entry name" value="hisS"/>
    <property type="match status" value="1"/>
</dbReference>
<dbReference type="PANTHER" id="PTHR43707:SF1">
    <property type="entry name" value="HISTIDINE--TRNA LIGASE, MITOCHONDRIAL-RELATED"/>
    <property type="match status" value="1"/>
</dbReference>
<dbReference type="PANTHER" id="PTHR43707">
    <property type="entry name" value="HISTIDYL-TRNA SYNTHETASE"/>
    <property type="match status" value="1"/>
</dbReference>
<dbReference type="Pfam" id="PF03129">
    <property type="entry name" value="HGTP_anticodon"/>
    <property type="match status" value="1"/>
</dbReference>
<dbReference type="Pfam" id="PF13393">
    <property type="entry name" value="tRNA-synt_His"/>
    <property type="match status" value="1"/>
</dbReference>
<dbReference type="PIRSF" id="PIRSF001549">
    <property type="entry name" value="His-tRNA_synth"/>
    <property type="match status" value="1"/>
</dbReference>
<dbReference type="SUPFAM" id="SSF52954">
    <property type="entry name" value="Class II aaRS ABD-related"/>
    <property type="match status" value="1"/>
</dbReference>
<dbReference type="SUPFAM" id="SSF55681">
    <property type="entry name" value="Class II aaRS and biotin synthetases"/>
    <property type="match status" value="1"/>
</dbReference>
<dbReference type="PROSITE" id="PS50862">
    <property type="entry name" value="AA_TRNA_LIGASE_II"/>
    <property type="match status" value="1"/>
</dbReference>
<name>SYH_DEIRA</name>
<protein>
    <recommendedName>
        <fullName evidence="1">Histidine--tRNA ligase</fullName>
        <ecNumber evidence="1">6.1.1.21</ecNumber>
    </recommendedName>
    <alternativeName>
        <fullName evidence="1">Histidyl-tRNA synthetase</fullName>
        <shortName evidence="1">HisRS</shortName>
    </alternativeName>
</protein>
<comment type="catalytic activity">
    <reaction evidence="1">
        <text>tRNA(His) + L-histidine + ATP = L-histidyl-tRNA(His) + AMP + diphosphate + H(+)</text>
        <dbReference type="Rhea" id="RHEA:17313"/>
        <dbReference type="Rhea" id="RHEA-COMP:9665"/>
        <dbReference type="Rhea" id="RHEA-COMP:9689"/>
        <dbReference type="ChEBI" id="CHEBI:15378"/>
        <dbReference type="ChEBI" id="CHEBI:30616"/>
        <dbReference type="ChEBI" id="CHEBI:33019"/>
        <dbReference type="ChEBI" id="CHEBI:57595"/>
        <dbReference type="ChEBI" id="CHEBI:78442"/>
        <dbReference type="ChEBI" id="CHEBI:78527"/>
        <dbReference type="ChEBI" id="CHEBI:456215"/>
        <dbReference type="EC" id="6.1.1.21"/>
    </reaction>
</comment>
<comment type="subunit">
    <text evidence="1">Homodimer.</text>
</comment>
<comment type="subcellular location">
    <subcellularLocation>
        <location evidence="1">Cytoplasm</location>
    </subcellularLocation>
</comment>
<comment type="similarity">
    <text evidence="1">Belongs to the class-II aminoacyl-tRNA synthetase family.</text>
</comment>
<feature type="chain" id="PRO_0000136153" description="Histidine--tRNA ligase">
    <location>
        <begin position="1"/>
        <end position="427"/>
    </location>
</feature>
<accession>Q9RUN5</accession>
<reference key="1">
    <citation type="journal article" date="1999" name="Science">
        <title>Genome sequence of the radioresistant bacterium Deinococcus radiodurans R1.</title>
        <authorList>
            <person name="White O."/>
            <person name="Eisen J.A."/>
            <person name="Heidelberg J.F."/>
            <person name="Hickey E.K."/>
            <person name="Peterson J.D."/>
            <person name="Dodson R.J."/>
            <person name="Haft D.H."/>
            <person name="Gwinn M.L."/>
            <person name="Nelson W.C."/>
            <person name="Richardson D.L."/>
            <person name="Moffat K.S."/>
            <person name="Qin H."/>
            <person name="Jiang L."/>
            <person name="Pamphile W."/>
            <person name="Crosby M."/>
            <person name="Shen M."/>
            <person name="Vamathevan J.J."/>
            <person name="Lam P."/>
            <person name="McDonald L.A."/>
            <person name="Utterback T.R."/>
            <person name="Zalewski C."/>
            <person name="Makarova K.S."/>
            <person name="Aravind L."/>
            <person name="Daly M.J."/>
            <person name="Minton K.W."/>
            <person name="Fleischmann R.D."/>
            <person name="Ketchum K.A."/>
            <person name="Nelson K.E."/>
            <person name="Salzberg S.L."/>
            <person name="Smith H.O."/>
            <person name="Venter J.C."/>
            <person name="Fraser C.M."/>
        </authorList>
    </citation>
    <scope>NUCLEOTIDE SEQUENCE [LARGE SCALE GENOMIC DNA]</scope>
    <source>
        <strain>ATCC 13939 / DSM 20539 / JCM 16871 / CCUG 27074 / LMG 4051 / NBRC 15346 / NCIMB 9279 / VKM B-1422 / R1</strain>
    </source>
</reference>
<sequence length="427" mass="46518">MAIQRPKGTNDLLPSGSPKTEAFQRAAAHEWLIAQAREVLERAGAQRIDTPMFEEAELVKRGVGGSTDIVRKEMFTVYYFGDHGGYVLRPEGTASIVRAYLENGLKQLPAPLKLWTSGPMFRAERHQKGRYRQFTQVDYEVLGSADALVDAEAIALMVAVVQKLGLRGVRVKLGSIGDPEDRERYNAYLRDLFSPHLGRLSDDSKDRLERNPMRILDSKSASDQELLAELSVRPMLDFLGEGAAADFRQVQAYLSDWGVPFDLDPSIVRGLDYYRRTAWELHYEGIGAKSALGGGGRYDGLSEQLGGGSVPGIGWAFGVERLLLALEQEGIEIPGSGGPQLYVAALDEENVPLAARVALAARASCRAEFAYRAMKPGSAFKDAERRGAVWVGLIGSEEAAAGTLSLKNLHTGEQKTVPVGELGQALA</sequence>
<gene>
    <name evidence="1" type="primary">hisS</name>
    <name type="ordered locus">DR_1349</name>
</gene>